<gene>
    <name type="ordered locus">Fphi_0115</name>
</gene>
<dbReference type="EMBL" id="CP000937">
    <property type="protein sequence ID" value="ABZ86336.1"/>
    <property type="molecule type" value="Genomic_DNA"/>
</dbReference>
<dbReference type="SMR" id="B0TY94"/>
<dbReference type="KEGG" id="fph:Fphi_0115"/>
<dbReference type="eggNOG" id="COG0718">
    <property type="taxonomic scope" value="Bacteria"/>
</dbReference>
<dbReference type="HOGENOM" id="CLU_140930_0_0_6"/>
<dbReference type="GO" id="GO:0043590">
    <property type="term" value="C:bacterial nucleoid"/>
    <property type="evidence" value="ECO:0007669"/>
    <property type="project" value="UniProtKB-UniRule"/>
</dbReference>
<dbReference type="GO" id="GO:0005829">
    <property type="term" value="C:cytosol"/>
    <property type="evidence" value="ECO:0007669"/>
    <property type="project" value="TreeGrafter"/>
</dbReference>
<dbReference type="GO" id="GO:0003677">
    <property type="term" value="F:DNA binding"/>
    <property type="evidence" value="ECO:0007669"/>
    <property type="project" value="UniProtKB-UniRule"/>
</dbReference>
<dbReference type="Gene3D" id="3.30.1310.10">
    <property type="entry name" value="Nucleoid-associated protein YbaB-like domain"/>
    <property type="match status" value="1"/>
</dbReference>
<dbReference type="HAMAP" id="MF_00274">
    <property type="entry name" value="DNA_YbaB_EbfC"/>
    <property type="match status" value="1"/>
</dbReference>
<dbReference type="InterPro" id="IPR036894">
    <property type="entry name" value="YbaB-like_sf"/>
</dbReference>
<dbReference type="InterPro" id="IPR004401">
    <property type="entry name" value="YbaB/EbfC"/>
</dbReference>
<dbReference type="NCBIfam" id="TIGR00103">
    <property type="entry name" value="DNA_YbaB_EbfC"/>
    <property type="match status" value="1"/>
</dbReference>
<dbReference type="PANTHER" id="PTHR33449">
    <property type="entry name" value="NUCLEOID-ASSOCIATED PROTEIN YBAB"/>
    <property type="match status" value="1"/>
</dbReference>
<dbReference type="PANTHER" id="PTHR33449:SF1">
    <property type="entry name" value="NUCLEOID-ASSOCIATED PROTEIN YBAB"/>
    <property type="match status" value="1"/>
</dbReference>
<dbReference type="Pfam" id="PF02575">
    <property type="entry name" value="YbaB_DNA_bd"/>
    <property type="match status" value="1"/>
</dbReference>
<dbReference type="PIRSF" id="PIRSF004555">
    <property type="entry name" value="UCP004555"/>
    <property type="match status" value="1"/>
</dbReference>
<dbReference type="SUPFAM" id="SSF82607">
    <property type="entry name" value="YbaB-like"/>
    <property type="match status" value="1"/>
</dbReference>
<organism>
    <name type="scientific">Francisella philomiragia subsp. philomiragia (strain ATCC 25017 / CCUG 19701 / FSC 153 / O#319-036)</name>
    <dbReference type="NCBI Taxonomy" id="484022"/>
    <lineage>
        <taxon>Bacteria</taxon>
        <taxon>Pseudomonadati</taxon>
        <taxon>Pseudomonadota</taxon>
        <taxon>Gammaproteobacteria</taxon>
        <taxon>Thiotrichales</taxon>
        <taxon>Francisellaceae</taxon>
        <taxon>Francisella</taxon>
    </lineage>
</organism>
<comment type="function">
    <text evidence="1">Binds to DNA and alters its conformation. May be involved in regulation of gene expression, nucleoid organization and DNA protection.</text>
</comment>
<comment type="subunit">
    <text evidence="1">Homodimer.</text>
</comment>
<comment type="subcellular location">
    <subcellularLocation>
        <location evidence="1">Cytoplasm</location>
        <location evidence="1">Nucleoid</location>
    </subcellularLocation>
</comment>
<comment type="similarity">
    <text evidence="1">Belongs to the YbaB/EbfC family.</text>
</comment>
<proteinExistence type="inferred from homology"/>
<feature type="chain" id="PRO_1000078758" description="Nucleoid-associated protein Fphi_0115">
    <location>
        <begin position="1"/>
        <end position="111"/>
    </location>
</feature>
<feature type="region of interest" description="Disordered" evidence="2">
    <location>
        <begin position="1"/>
        <end position="27"/>
    </location>
</feature>
<feature type="compositionally biased region" description="Basic and acidic residues" evidence="2">
    <location>
        <begin position="17"/>
        <end position="27"/>
    </location>
</feature>
<name>Y120_FRAP2</name>
<reference key="1">
    <citation type="submission" date="2007-12" db="EMBL/GenBank/DDBJ databases">
        <title>Complete sequence of chromosome of Francisella philomiragia subsp. philomiragia ATCC 25017.</title>
        <authorList>
            <consortium name="US DOE Joint Genome Institute"/>
            <person name="Copeland A."/>
            <person name="Lucas S."/>
            <person name="Lapidus A."/>
            <person name="Barry K."/>
            <person name="Detter J.C."/>
            <person name="Glavina del Rio T."/>
            <person name="Hammon N."/>
            <person name="Israni S."/>
            <person name="Dalin E."/>
            <person name="Tice H."/>
            <person name="Pitluck S."/>
            <person name="Chain P."/>
            <person name="Malfatti S."/>
            <person name="Shin M."/>
            <person name="Vergez L."/>
            <person name="Schmutz J."/>
            <person name="Larimer F."/>
            <person name="Land M."/>
            <person name="Hauser L."/>
            <person name="Richardson P."/>
        </authorList>
    </citation>
    <scope>NUCLEOTIDE SEQUENCE [LARGE SCALE GENOMIC DNA]</scope>
    <source>
        <strain>ATCC 25017 / CCUG 19701 / FSC 153 / O#319-036</strain>
    </source>
</reference>
<protein>
    <recommendedName>
        <fullName evidence="1">Nucleoid-associated protein Fphi_0115</fullName>
    </recommendedName>
</protein>
<keyword id="KW-0963">Cytoplasm</keyword>
<keyword id="KW-0238">DNA-binding</keyword>
<accession>B0TY94</accession>
<sequence length="111" mass="12215">MNFDMSKLMQQAQKMQEQMKKAQQERENMEVIGESGAGLVSVTMTGKYDVKKVTIDDSLMSEDKEMLEDLIAAAVNSAVKKVEDSSSSADIGKMAKEAGIDLPNGFNFPFK</sequence>
<evidence type="ECO:0000255" key="1">
    <source>
        <dbReference type="HAMAP-Rule" id="MF_00274"/>
    </source>
</evidence>
<evidence type="ECO:0000256" key="2">
    <source>
        <dbReference type="SAM" id="MobiDB-lite"/>
    </source>
</evidence>